<dbReference type="EC" id="2.7.7.67" evidence="1"/>
<dbReference type="EMBL" id="CP000559">
    <property type="protein sequence ID" value="ABN06494.1"/>
    <property type="status" value="ALT_INIT"/>
    <property type="molecule type" value="Genomic_DNA"/>
</dbReference>
<dbReference type="RefSeq" id="WP_048061961.1">
    <property type="nucleotide sequence ID" value="NC_008942.1"/>
</dbReference>
<dbReference type="STRING" id="410358.Mlab_0318"/>
<dbReference type="GeneID" id="4795201"/>
<dbReference type="KEGG" id="mla:Mlab_0318"/>
<dbReference type="eggNOG" id="arCOG04106">
    <property type="taxonomic scope" value="Archaea"/>
</dbReference>
<dbReference type="HOGENOM" id="CLU_105710_0_0_2"/>
<dbReference type="UniPathway" id="UPA00940"/>
<dbReference type="Proteomes" id="UP000000365">
    <property type="component" value="Chromosome"/>
</dbReference>
<dbReference type="GO" id="GO:0005886">
    <property type="term" value="C:plasma membrane"/>
    <property type="evidence" value="ECO:0007669"/>
    <property type="project" value="UniProtKB-SubCell"/>
</dbReference>
<dbReference type="GO" id="GO:0043338">
    <property type="term" value="F:CDP-2,3-bis-(O-geranylgeranyl)-sn-glycerol synthase activity"/>
    <property type="evidence" value="ECO:0007669"/>
    <property type="project" value="UniProtKB-EC"/>
</dbReference>
<dbReference type="GO" id="GO:0046474">
    <property type="term" value="P:glycerophospholipid biosynthetic process"/>
    <property type="evidence" value="ECO:0007669"/>
    <property type="project" value="UniProtKB-UniRule"/>
</dbReference>
<dbReference type="HAMAP" id="MF_01117">
    <property type="entry name" value="CDP_archaeol_synth"/>
    <property type="match status" value="1"/>
</dbReference>
<dbReference type="InterPro" id="IPR032690">
    <property type="entry name" value="CarS"/>
</dbReference>
<dbReference type="InterPro" id="IPR002726">
    <property type="entry name" value="CarS_archaea"/>
</dbReference>
<dbReference type="NCBIfam" id="NF003114">
    <property type="entry name" value="PRK04032.1"/>
    <property type="match status" value="1"/>
</dbReference>
<dbReference type="PANTHER" id="PTHR39650">
    <property type="entry name" value="CDP-ARCHAEOL SYNTHASE"/>
    <property type="match status" value="1"/>
</dbReference>
<dbReference type="PANTHER" id="PTHR39650:SF1">
    <property type="entry name" value="CDP-ARCHAEOL SYNTHASE"/>
    <property type="match status" value="1"/>
</dbReference>
<dbReference type="Pfam" id="PF01864">
    <property type="entry name" value="CarS-like"/>
    <property type="match status" value="1"/>
</dbReference>
<feature type="chain" id="PRO_0000298277" description="CDP-archaeol synthase">
    <location>
        <begin position="1"/>
        <end position="176"/>
    </location>
</feature>
<feature type="transmembrane region" description="Helical" evidence="1">
    <location>
        <begin position="41"/>
        <end position="61"/>
    </location>
</feature>
<feature type="transmembrane region" description="Helical" evidence="1">
    <location>
        <begin position="73"/>
        <end position="93"/>
    </location>
</feature>
<feature type="transmembrane region" description="Helical" evidence="1">
    <location>
        <begin position="114"/>
        <end position="134"/>
    </location>
</feature>
<feature type="transmembrane region" description="Helical" evidence="1">
    <location>
        <begin position="138"/>
        <end position="158"/>
    </location>
</feature>
<proteinExistence type="inferred from homology"/>
<comment type="function">
    <text evidence="1">Catalyzes the formation of CDP-2,3-bis-(O-geranylgeranyl)-sn-glycerol (CDP-archaeol) from 2,3-bis-(O-geranylgeranyl)-sn-glycerol 1-phosphate (DGGGP) and CTP. This reaction is the third ether-bond-formation step in the biosynthesis of archaeal membrane lipids.</text>
</comment>
<comment type="catalytic activity">
    <reaction evidence="1">
        <text>2,3-bis-O-(geranylgeranyl)-sn-glycerol 1-phosphate + CTP + H(+) = CDP-2,3-bis-O-(geranylgeranyl)-sn-glycerol + diphosphate</text>
        <dbReference type="Rhea" id="RHEA:25690"/>
        <dbReference type="ChEBI" id="CHEBI:15378"/>
        <dbReference type="ChEBI" id="CHEBI:33019"/>
        <dbReference type="ChEBI" id="CHEBI:37563"/>
        <dbReference type="ChEBI" id="CHEBI:58837"/>
        <dbReference type="ChEBI" id="CHEBI:58838"/>
        <dbReference type="EC" id="2.7.7.67"/>
    </reaction>
</comment>
<comment type="cofactor">
    <cofactor evidence="1">
        <name>Mg(2+)</name>
        <dbReference type="ChEBI" id="CHEBI:18420"/>
    </cofactor>
</comment>
<comment type="pathway">
    <text evidence="1">Membrane lipid metabolism; glycerophospholipid metabolism.</text>
</comment>
<comment type="subcellular location">
    <subcellularLocation>
        <location evidence="1">Cell membrane</location>
        <topology evidence="1">Multi-pass membrane protein</topology>
    </subcellularLocation>
</comment>
<comment type="similarity">
    <text evidence="1">Belongs to the CDP-archaeol synthase family.</text>
</comment>
<comment type="sequence caution" evidence="2">
    <conflict type="erroneous initiation">
        <sequence resource="EMBL-CDS" id="ABN06494"/>
    </conflict>
</comment>
<organism>
    <name type="scientific">Methanocorpusculum labreanum (strain ATCC 43576 / DSM 4855 / Z)</name>
    <dbReference type="NCBI Taxonomy" id="410358"/>
    <lineage>
        <taxon>Archaea</taxon>
        <taxon>Methanobacteriati</taxon>
        <taxon>Methanobacteriota</taxon>
        <taxon>Stenosarchaea group</taxon>
        <taxon>Methanomicrobia</taxon>
        <taxon>Methanomicrobiales</taxon>
        <taxon>Methanocorpusculaceae</taxon>
        <taxon>Methanocorpusculum</taxon>
    </lineage>
</organism>
<sequence length="176" mass="19178">MIPAYIPNPAAALLGGGTPVDFGKCAKDGRRILGDGKTWRGLIGGIVVGIIFGLMQIFLYNYFNLEFLPKQTIITVCALATGALLGDMVKSYFKRRLGKDRGAKWPIADMYDMVVGSLVLMTLALLVTGNLNWFTENFDSVGFLIATIIAILILSPLLHRGTNIIGYLLGLKDVPW</sequence>
<protein>
    <recommendedName>
        <fullName evidence="1">CDP-archaeol synthase</fullName>
        <ecNumber evidence="1">2.7.7.67</ecNumber>
    </recommendedName>
    <alternativeName>
        <fullName evidence="1">CDP-2,3-bis-(O-geranylgeranyl)-sn-glycerol synthase</fullName>
    </alternativeName>
</protein>
<keyword id="KW-1003">Cell membrane</keyword>
<keyword id="KW-0444">Lipid biosynthesis</keyword>
<keyword id="KW-0443">Lipid metabolism</keyword>
<keyword id="KW-0460">Magnesium</keyword>
<keyword id="KW-0472">Membrane</keyword>
<keyword id="KW-0594">Phospholipid biosynthesis</keyword>
<keyword id="KW-1208">Phospholipid metabolism</keyword>
<keyword id="KW-1185">Reference proteome</keyword>
<keyword id="KW-0808">Transferase</keyword>
<keyword id="KW-0812">Transmembrane</keyword>
<keyword id="KW-1133">Transmembrane helix</keyword>
<accession>A2SQ88</accession>
<gene>
    <name evidence="1" type="primary">carS</name>
    <name type="ordered locus">Mlab_0318</name>
</gene>
<reference key="1">
    <citation type="journal article" date="2009" name="Stand. Genomic Sci.">
        <title>Complete genome sequence of Methanocorpusculum labreanum type strain Z.</title>
        <authorList>
            <person name="Anderson I.J."/>
            <person name="Sieprawska-Lupa M."/>
            <person name="Goltsman E."/>
            <person name="Lapidus A."/>
            <person name="Copeland A."/>
            <person name="Glavina Del Rio T."/>
            <person name="Tice H."/>
            <person name="Dalin E."/>
            <person name="Barry K."/>
            <person name="Pitluck S."/>
            <person name="Hauser L."/>
            <person name="Land M."/>
            <person name="Lucas S."/>
            <person name="Richardson P."/>
            <person name="Whitman W.B."/>
            <person name="Kyrpides N.C."/>
        </authorList>
    </citation>
    <scope>NUCLEOTIDE SEQUENCE [LARGE SCALE GENOMIC DNA]</scope>
    <source>
        <strain>ATCC 43576 / DSM 4855 / Z</strain>
    </source>
</reference>
<name>CDPAS_METLZ</name>
<evidence type="ECO:0000255" key="1">
    <source>
        <dbReference type="HAMAP-Rule" id="MF_01117"/>
    </source>
</evidence>
<evidence type="ECO:0000305" key="2"/>